<name>LOR7_ARATH</name>
<protein>
    <recommendedName>
        <fullName>Protein LURP-one-related 7</fullName>
    </recommendedName>
</protein>
<sequence>MADSETPYHPDPEDLRRIPVDLFASKKLPGLSSGDLGFADSSEHLVFILRKSSSSLKSLLDSSGVPLFSISRLHNGVWELHKGDVEKRKDLVLTVKRTSKRFSKTESEVSFAGESSENLVIKGVPFQKSCTIYSQDSIVAQTSLMYKLRQIYVGRSKFRLTIFPGSIDHSLVVAMVAIFLQG</sequence>
<organism>
    <name type="scientific">Arabidopsis thaliana</name>
    <name type="common">Mouse-ear cress</name>
    <dbReference type="NCBI Taxonomy" id="3702"/>
    <lineage>
        <taxon>Eukaryota</taxon>
        <taxon>Viridiplantae</taxon>
        <taxon>Streptophyta</taxon>
        <taxon>Embryophyta</taxon>
        <taxon>Tracheophyta</taxon>
        <taxon>Spermatophyta</taxon>
        <taxon>Magnoliopsida</taxon>
        <taxon>eudicotyledons</taxon>
        <taxon>Gunneridae</taxon>
        <taxon>Pentapetalae</taxon>
        <taxon>rosids</taxon>
        <taxon>malvids</taxon>
        <taxon>Brassicales</taxon>
        <taxon>Brassicaceae</taxon>
        <taxon>Camelineae</taxon>
        <taxon>Arabidopsis</taxon>
    </lineage>
</organism>
<feature type="chain" id="PRO_0000399239" description="Protein LURP-one-related 7">
    <location>
        <begin position="1"/>
        <end position="182"/>
    </location>
</feature>
<evidence type="ECO:0000250" key="1"/>
<evidence type="ECO:0000305" key="2"/>
<comment type="function">
    <text evidence="1">Might be related to the phospholipid scramblase and tubby-like superfamily of membrane tethered transcription factors.</text>
</comment>
<comment type="similarity">
    <text evidence="2">Belongs to the LOR family.</text>
</comment>
<comment type="sequence caution" evidence="2">
    <conflict type="erroneous gene model prediction">
        <sequence resource="EMBL-CDS" id="AAC16932"/>
    </conflict>
</comment>
<reference key="1">
    <citation type="journal article" date="1999" name="Nature">
        <title>Sequence and analysis of chromosome 2 of the plant Arabidopsis thaliana.</title>
        <authorList>
            <person name="Lin X."/>
            <person name="Kaul S."/>
            <person name="Rounsley S.D."/>
            <person name="Shea T.P."/>
            <person name="Benito M.-I."/>
            <person name="Town C.D."/>
            <person name="Fujii C.Y."/>
            <person name="Mason T.M."/>
            <person name="Bowman C.L."/>
            <person name="Barnstead M.E."/>
            <person name="Feldblyum T.V."/>
            <person name="Buell C.R."/>
            <person name="Ketchum K.A."/>
            <person name="Lee J.J."/>
            <person name="Ronning C.M."/>
            <person name="Koo H.L."/>
            <person name="Moffat K.S."/>
            <person name="Cronin L.A."/>
            <person name="Shen M."/>
            <person name="Pai G."/>
            <person name="Van Aken S."/>
            <person name="Umayam L."/>
            <person name="Tallon L.J."/>
            <person name="Gill J.E."/>
            <person name="Adams M.D."/>
            <person name="Carrera A.J."/>
            <person name="Creasy T.H."/>
            <person name="Goodman H.M."/>
            <person name="Somerville C.R."/>
            <person name="Copenhaver G.P."/>
            <person name="Preuss D."/>
            <person name="Nierman W.C."/>
            <person name="White O."/>
            <person name="Eisen J.A."/>
            <person name="Salzberg S.L."/>
            <person name="Fraser C.M."/>
            <person name="Venter J.C."/>
        </authorList>
    </citation>
    <scope>NUCLEOTIDE SEQUENCE [LARGE SCALE GENOMIC DNA]</scope>
    <source>
        <strain>cv. Columbia</strain>
    </source>
</reference>
<reference key="2">
    <citation type="journal article" date="2017" name="Plant J.">
        <title>Araport11: a complete reannotation of the Arabidopsis thaliana reference genome.</title>
        <authorList>
            <person name="Cheng C.Y."/>
            <person name="Krishnakumar V."/>
            <person name="Chan A.P."/>
            <person name="Thibaud-Nissen F."/>
            <person name="Schobel S."/>
            <person name="Town C.D."/>
        </authorList>
    </citation>
    <scope>GENOME REANNOTATION</scope>
    <source>
        <strain>cv. Columbia</strain>
    </source>
</reference>
<reference key="3">
    <citation type="journal article" date="2002" name="Science">
        <title>Functional annotation of a full-length Arabidopsis cDNA collection.</title>
        <authorList>
            <person name="Seki M."/>
            <person name="Narusaka M."/>
            <person name="Kamiya A."/>
            <person name="Ishida J."/>
            <person name="Satou M."/>
            <person name="Sakurai T."/>
            <person name="Nakajima M."/>
            <person name="Enju A."/>
            <person name="Akiyama K."/>
            <person name="Oono Y."/>
            <person name="Muramatsu M."/>
            <person name="Hayashizaki Y."/>
            <person name="Kawai J."/>
            <person name="Carninci P."/>
            <person name="Itoh M."/>
            <person name="Ishii Y."/>
            <person name="Arakawa T."/>
            <person name="Shibata K."/>
            <person name="Shinagawa A."/>
            <person name="Shinozaki K."/>
        </authorList>
    </citation>
    <scope>NUCLEOTIDE SEQUENCE [LARGE SCALE MRNA]</scope>
    <source>
        <strain>cv. Columbia</strain>
    </source>
</reference>
<reference key="4">
    <citation type="journal article" date="2003" name="Science">
        <title>Empirical analysis of transcriptional activity in the Arabidopsis genome.</title>
        <authorList>
            <person name="Yamada K."/>
            <person name="Lim J."/>
            <person name="Dale J.M."/>
            <person name="Chen H."/>
            <person name="Shinn P."/>
            <person name="Palm C.J."/>
            <person name="Southwick A.M."/>
            <person name="Wu H.C."/>
            <person name="Kim C.J."/>
            <person name="Nguyen M."/>
            <person name="Pham P.K."/>
            <person name="Cheuk R.F."/>
            <person name="Karlin-Newmann G."/>
            <person name="Liu S.X."/>
            <person name="Lam B."/>
            <person name="Sakano H."/>
            <person name="Wu T."/>
            <person name="Yu G."/>
            <person name="Miranda M."/>
            <person name="Quach H.L."/>
            <person name="Tripp M."/>
            <person name="Chang C.H."/>
            <person name="Lee J.M."/>
            <person name="Toriumi M.J."/>
            <person name="Chan M.M."/>
            <person name="Tang C.C."/>
            <person name="Onodera C.S."/>
            <person name="Deng J.M."/>
            <person name="Akiyama K."/>
            <person name="Ansari Y."/>
            <person name="Arakawa T."/>
            <person name="Banh J."/>
            <person name="Banno F."/>
            <person name="Bowser L."/>
            <person name="Brooks S.Y."/>
            <person name="Carninci P."/>
            <person name="Chao Q."/>
            <person name="Choy N."/>
            <person name="Enju A."/>
            <person name="Goldsmith A.D."/>
            <person name="Gurjal M."/>
            <person name="Hansen N.F."/>
            <person name="Hayashizaki Y."/>
            <person name="Johnson-Hopson C."/>
            <person name="Hsuan V.W."/>
            <person name="Iida K."/>
            <person name="Karnes M."/>
            <person name="Khan S."/>
            <person name="Koesema E."/>
            <person name="Ishida J."/>
            <person name="Jiang P.X."/>
            <person name="Jones T."/>
            <person name="Kawai J."/>
            <person name="Kamiya A."/>
            <person name="Meyers C."/>
            <person name="Nakajima M."/>
            <person name="Narusaka M."/>
            <person name="Seki M."/>
            <person name="Sakurai T."/>
            <person name="Satou M."/>
            <person name="Tamse R."/>
            <person name="Vaysberg M."/>
            <person name="Wallender E.K."/>
            <person name="Wong C."/>
            <person name="Yamamura Y."/>
            <person name="Yuan S."/>
            <person name="Shinozaki K."/>
            <person name="Davis R.W."/>
            <person name="Theologis A."/>
            <person name="Ecker J.R."/>
        </authorList>
    </citation>
    <scope>NUCLEOTIDE SEQUENCE [LARGE SCALE MRNA]</scope>
    <source>
        <strain>cv. Columbia</strain>
    </source>
</reference>
<keyword id="KW-1185">Reference proteome</keyword>
<gene>
    <name type="ordered locus">At2g30270</name>
    <name type="ORF">T9D9.8</name>
</gene>
<dbReference type="EMBL" id="AC002338">
    <property type="protein sequence ID" value="AAC16932.1"/>
    <property type="status" value="ALT_SEQ"/>
    <property type="molecule type" value="Genomic_DNA"/>
</dbReference>
<dbReference type="EMBL" id="CP002685">
    <property type="protein sequence ID" value="AEC08364.1"/>
    <property type="molecule type" value="Genomic_DNA"/>
</dbReference>
<dbReference type="EMBL" id="AK118774">
    <property type="protein sequence ID" value="BAC43367.1"/>
    <property type="molecule type" value="mRNA"/>
</dbReference>
<dbReference type="EMBL" id="BT005487">
    <property type="protein sequence ID" value="AAO63907.1"/>
    <property type="molecule type" value="mRNA"/>
</dbReference>
<dbReference type="PIR" id="D84706">
    <property type="entry name" value="D84706"/>
</dbReference>
<dbReference type="RefSeq" id="NP_180586.2">
    <property type="nucleotide sequence ID" value="NM_128580.5"/>
</dbReference>
<dbReference type="SMR" id="Q8GWL2"/>
<dbReference type="BioGRID" id="2926">
    <property type="interactions" value="1"/>
</dbReference>
<dbReference type="FunCoup" id="Q8GWL2">
    <property type="interactions" value="266"/>
</dbReference>
<dbReference type="IntAct" id="Q8GWL2">
    <property type="interactions" value="1"/>
</dbReference>
<dbReference type="STRING" id="3702.Q8GWL2"/>
<dbReference type="PaxDb" id="3702-AT2G30270.1"/>
<dbReference type="ProteomicsDB" id="238442"/>
<dbReference type="DNASU" id="817577"/>
<dbReference type="EnsemblPlants" id="AT2G30270.1">
    <property type="protein sequence ID" value="AT2G30270.1"/>
    <property type="gene ID" value="AT2G30270"/>
</dbReference>
<dbReference type="GeneID" id="817577"/>
<dbReference type="Gramene" id="AT2G30270.1">
    <property type="protein sequence ID" value="AT2G30270.1"/>
    <property type="gene ID" value="AT2G30270"/>
</dbReference>
<dbReference type="KEGG" id="ath:AT2G30270"/>
<dbReference type="Araport" id="AT2G30270"/>
<dbReference type="TAIR" id="AT2G30270"/>
<dbReference type="eggNOG" id="ENOG502RZXW">
    <property type="taxonomic scope" value="Eukaryota"/>
</dbReference>
<dbReference type="HOGENOM" id="CLU_063146_4_1_1"/>
<dbReference type="InParanoid" id="Q8GWL2"/>
<dbReference type="OMA" id="QFPFDLF"/>
<dbReference type="PhylomeDB" id="Q8GWL2"/>
<dbReference type="PRO" id="PR:Q8GWL2"/>
<dbReference type="Proteomes" id="UP000006548">
    <property type="component" value="Chromosome 2"/>
</dbReference>
<dbReference type="ExpressionAtlas" id="Q8GWL2">
    <property type="expression patterns" value="baseline and differential"/>
</dbReference>
<dbReference type="FunFam" id="2.40.160.200:FF:000002">
    <property type="entry name" value="Protein LURP-one-related 7"/>
    <property type="match status" value="1"/>
</dbReference>
<dbReference type="Gene3D" id="2.40.160.200">
    <property type="entry name" value="LURP1-related"/>
    <property type="match status" value="1"/>
</dbReference>
<dbReference type="InterPro" id="IPR007612">
    <property type="entry name" value="LOR"/>
</dbReference>
<dbReference type="InterPro" id="IPR038595">
    <property type="entry name" value="LOR_sf"/>
</dbReference>
<dbReference type="InterPro" id="IPR025659">
    <property type="entry name" value="Tubby-like_C"/>
</dbReference>
<dbReference type="PANTHER" id="PTHR31087">
    <property type="match status" value="1"/>
</dbReference>
<dbReference type="PANTHER" id="PTHR31087:SF85">
    <property type="entry name" value="PROTEIN LURP-ONE-RELATED 7"/>
    <property type="match status" value="1"/>
</dbReference>
<dbReference type="Pfam" id="PF04525">
    <property type="entry name" value="LOR"/>
    <property type="match status" value="1"/>
</dbReference>
<dbReference type="SUPFAM" id="SSF54518">
    <property type="entry name" value="Tubby C-terminal domain-like"/>
    <property type="match status" value="1"/>
</dbReference>
<accession>Q8GWL2</accession>
<accession>O22923</accession>
<proteinExistence type="evidence at transcript level"/>